<feature type="initiator methionine" description="Removed">
    <location>
        <position position="1"/>
    </location>
</feature>
<feature type="chain" id="PRO_0000442825" description="Actin, alpha skeletal muscle B, intermediate form" evidence="1">
    <location>
        <begin position="2"/>
        <end position="377"/>
    </location>
</feature>
<feature type="chain" id="PRO_0000442826" description="Actin, alpha skeletal muscle B" evidence="1">
    <location>
        <begin position="3"/>
        <end position="377"/>
    </location>
</feature>
<feature type="modified residue" description="N-acetylcysteine; in intermediate form" evidence="1">
    <location>
        <position position="2"/>
    </location>
</feature>
<feature type="modified residue" description="N-acetylaspartate; in Actin, alpha skeletal muscle B" evidence="4">
    <location>
        <position position="3"/>
    </location>
</feature>
<feature type="modified residue" description="Methionine (R)-sulfoxide" evidence="3">
    <location>
        <position position="46"/>
    </location>
</feature>
<feature type="modified residue" description="Methionine (R)-sulfoxide" evidence="3">
    <location>
        <position position="49"/>
    </location>
</feature>
<feature type="modified residue" description="Tele-methylhistidine" evidence="4">
    <location>
        <position position="75"/>
    </location>
</feature>
<feature type="modified residue" description="N6-methyllysine" evidence="2">
    <location>
        <position position="86"/>
    </location>
</feature>
<sequence length="377" mass="41977">MCDDDETTALVCDNGSGLVKAGFAGDDAPRAVFPSIVGRPRHQGVMVGMGQKDSYVGDEAQSKRGILTLKYPIEHGIITNWDDMEKIWHHSFYNELRVAPEEHPTLLTEAPLNPKANREKMTQIMFETFNVPAMYVAIQAVLSLYASGRTTGIVLDSGDGVTHNVPIYEGYALPHAIMRLDLAGRDLTDYLMKILTERGYSFVTTAEREIVRDIKEKLCYVALDFENEMGTAASSSSLEKSYELPDGQVITIGNERFRCPETLFQPSFIGMESAGIHETTYNSIMKCDIDIRKDLYANNVLSGGTTMYPGIADRMQKEITALAPSTMKIKIIAPPERKYSVWIGGSILASLSTFQQMWISKQEYDEAGPSIVHRKCF</sequence>
<accession>P53482</accession>
<comment type="function">
    <text>Actins are highly conserved proteins that are involved in various types of cell motility and are ubiquitously expressed in all eukaryotic cells.</text>
</comment>
<comment type="catalytic activity">
    <reaction evidence="5">
        <text>ATP + H2O = ADP + phosphate + H(+)</text>
        <dbReference type="Rhea" id="RHEA:13065"/>
        <dbReference type="ChEBI" id="CHEBI:15377"/>
        <dbReference type="ChEBI" id="CHEBI:15378"/>
        <dbReference type="ChEBI" id="CHEBI:30616"/>
        <dbReference type="ChEBI" id="CHEBI:43474"/>
        <dbReference type="ChEBI" id="CHEBI:456216"/>
    </reaction>
</comment>
<comment type="subunit">
    <text>Polymerization of globular actin (G-actin) leads to a structural filament (F-actin) in the form of a two-stranded helix. Each actin can bind to 4 others.</text>
</comment>
<comment type="subcellular location">
    <subcellularLocation>
        <location>Cytoplasm</location>
        <location>Cytoskeleton</location>
    </subcellularLocation>
</comment>
<comment type="tissue specificity">
    <text evidence="6">Predominantly expressed in skeletal muscle. Lower levels in heart, gills and skin.</text>
</comment>
<comment type="PTM">
    <molecule>Actin, alpha skeletal muscle B, intermediate form</molecule>
    <text evidence="3">N-terminal cleavage of acetylated cysteine of intermediate muscle actin by ACTMAP.</text>
</comment>
<comment type="PTM">
    <text evidence="3">Oxidation of Met-46 and Met-49 by MICALs (MICAL1, MICAL2 or MICAL3) to form methionine sulfoxide promotes actin filament depolymerization. MICAL1 and MICAL2 produce the (R)-S-oxide form. The (R)-S-oxide form is reverted by MSRB1 and MSRB2, which promotes actin repolymerization.</text>
</comment>
<comment type="PTM">
    <text evidence="2">Monomethylation at Lys-86 (K84me1) regulates actin-myosin interaction and actomyosin-dependent processes. Demethylation by ALKBH4 is required for maintaining actomyosin dynamics supporting normal cleavage furrow ingression during cytokinesis and cell migration.</text>
</comment>
<comment type="PTM">
    <text evidence="2">Methylated at His-75 by SETD3.</text>
</comment>
<comment type="miscellaneous">
    <text>In vertebrates 3 main groups of actin isoforms, alpha, beta and gamma have been identified. The alpha actins are found in muscle tissues and are a major constituent of the contractile apparatus. The beta and gamma actins coexist in most cell types as components of the cytoskeleton and as mediators of internal cell motility.</text>
</comment>
<comment type="miscellaneous">
    <text>There are two different alpha-skeletal actins in Fugu rubripes.</text>
</comment>
<comment type="similarity">
    <text evidence="7">Belongs to the actin family.</text>
</comment>
<gene>
    <name type="primary">acta1b</name>
</gene>
<name>ACTSB_TAKRU</name>
<organism>
    <name type="scientific">Takifugu rubripes</name>
    <name type="common">Japanese pufferfish</name>
    <name type="synonym">Fugu rubripes</name>
    <dbReference type="NCBI Taxonomy" id="31033"/>
    <lineage>
        <taxon>Eukaryota</taxon>
        <taxon>Metazoa</taxon>
        <taxon>Chordata</taxon>
        <taxon>Craniata</taxon>
        <taxon>Vertebrata</taxon>
        <taxon>Euteleostomi</taxon>
        <taxon>Actinopterygii</taxon>
        <taxon>Neopterygii</taxon>
        <taxon>Teleostei</taxon>
        <taxon>Neoteleostei</taxon>
        <taxon>Acanthomorphata</taxon>
        <taxon>Eupercaria</taxon>
        <taxon>Tetraodontiformes</taxon>
        <taxon>Tetradontoidea</taxon>
        <taxon>Tetraodontidae</taxon>
        <taxon>Takifugu</taxon>
    </lineage>
</organism>
<dbReference type="EC" id="3.6.4.-" evidence="5"/>
<dbReference type="EMBL" id="U38958">
    <property type="protein sequence ID" value="AAC59893.1"/>
    <property type="molecule type" value="Genomic_DNA"/>
</dbReference>
<dbReference type="PIR" id="S71119">
    <property type="entry name" value="S71119"/>
</dbReference>
<dbReference type="SMR" id="P53482"/>
<dbReference type="STRING" id="31033.ENSTRUP00000036620"/>
<dbReference type="eggNOG" id="KOG0676">
    <property type="taxonomic scope" value="Eukaryota"/>
</dbReference>
<dbReference type="InParanoid" id="P53482"/>
<dbReference type="Proteomes" id="UP000005226">
    <property type="component" value="Unplaced"/>
</dbReference>
<dbReference type="GO" id="GO:0044297">
    <property type="term" value="C:cell body"/>
    <property type="evidence" value="ECO:0000250"/>
    <property type="project" value="AgBase"/>
</dbReference>
<dbReference type="GO" id="GO:0005737">
    <property type="term" value="C:cytoplasm"/>
    <property type="evidence" value="ECO:0000250"/>
    <property type="project" value="AgBase"/>
</dbReference>
<dbReference type="GO" id="GO:0005856">
    <property type="term" value="C:cytoskeleton"/>
    <property type="evidence" value="ECO:0007669"/>
    <property type="project" value="UniProtKB-SubCell"/>
</dbReference>
<dbReference type="GO" id="GO:0030175">
    <property type="term" value="C:filopodium"/>
    <property type="evidence" value="ECO:0000250"/>
    <property type="project" value="AgBase"/>
</dbReference>
<dbReference type="GO" id="GO:0030027">
    <property type="term" value="C:lamellipodium"/>
    <property type="evidence" value="ECO:0000250"/>
    <property type="project" value="AgBase"/>
</dbReference>
<dbReference type="GO" id="GO:0005524">
    <property type="term" value="F:ATP binding"/>
    <property type="evidence" value="ECO:0007669"/>
    <property type="project" value="UniProtKB-KW"/>
</dbReference>
<dbReference type="GO" id="GO:0016787">
    <property type="term" value="F:hydrolase activity"/>
    <property type="evidence" value="ECO:0007669"/>
    <property type="project" value="UniProtKB-KW"/>
</dbReference>
<dbReference type="GO" id="GO:0090131">
    <property type="term" value="P:mesenchyme migration"/>
    <property type="evidence" value="ECO:0000250"/>
    <property type="project" value="AgBase"/>
</dbReference>
<dbReference type="GO" id="GO:0010628">
    <property type="term" value="P:positive regulation of gene expression"/>
    <property type="evidence" value="ECO:0000250"/>
    <property type="project" value="AgBase"/>
</dbReference>
<dbReference type="CDD" id="cd10224">
    <property type="entry name" value="ASKHA_NBD_actin"/>
    <property type="match status" value="1"/>
</dbReference>
<dbReference type="FunFam" id="2.30.36.70:FF:000001">
    <property type="entry name" value="Actin, alpha skeletal muscle"/>
    <property type="match status" value="1"/>
</dbReference>
<dbReference type="FunFam" id="3.30.420.40:FF:000131">
    <property type="entry name" value="Actin, alpha skeletal muscle"/>
    <property type="match status" value="1"/>
</dbReference>
<dbReference type="FunFam" id="3.30.420.40:FF:000291">
    <property type="entry name" value="Actin, alpha skeletal muscle"/>
    <property type="match status" value="1"/>
</dbReference>
<dbReference type="FunFam" id="3.90.640.10:FF:000047">
    <property type="entry name" value="Actin, alpha skeletal muscle"/>
    <property type="match status" value="1"/>
</dbReference>
<dbReference type="FunFam" id="3.30.420.40:FF:000058">
    <property type="entry name" value="Putative actin-related protein 5"/>
    <property type="match status" value="1"/>
</dbReference>
<dbReference type="Gene3D" id="3.30.420.40">
    <property type="match status" value="2"/>
</dbReference>
<dbReference type="Gene3D" id="3.90.640.10">
    <property type="entry name" value="Actin, Chain A, domain 4"/>
    <property type="match status" value="1"/>
</dbReference>
<dbReference type="InterPro" id="IPR004000">
    <property type="entry name" value="Actin"/>
</dbReference>
<dbReference type="InterPro" id="IPR020902">
    <property type="entry name" value="Actin/actin-like_CS"/>
</dbReference>
<dbReference type="InterPro" id="IPR004001">
    <property type="entry name" value="Actin_CS"/>
</dbReference>
<dbReference type="InterPro" id="IPR043129">
    <property type="entry name" value="ATPase_NBD"/>
</dbReference>
<dbReference type="PANTHER" id="PTHR11937">
    <property type="entry name" value="ACTIN"/>
    <property type="match status" value="1"/>
</dbReference>
<dbReference type="Pfam" id="PF00022">
    <property type="entry name" value="Actin"/>
    <property type="match status" value="1"/>
</dbReference>
<dbReference type="PRINTS" id="PR00190">
    <property type="entry name" value="ACTIN"/>
</dbReference>
<dbReference type="SMART" id="SM00268">
    <property type="entry name" value="ACTIN"/>
    <property type="match status" value="1"/>
</dbReference>
<dbReference type="SUPFAM" id="SSF53067">
    <property type="entry name" value="Actin-like ATPase domain"/>
    <property type="match status" value="2"/>
</dbReference>
<dbReference type="PROSITE" id="PS00406">
    <property type="entry name" value="ACTINS_1"/>
    <property type="match status" value="1"/>
</dbReference>
<dbReference type="PROSITE" id="PS00432">
    <property type="entry name" value="ACTINS_2"/>
    <property type="match status" value="1"/>
</dbReference>
<dbReference type="PROSITE" id="PS01132">
    <property type="entry name" value="ACTINS_ACT_LIKE"/>
    <property type="match status" value="1"/>
</dbReference>
<reference key="1">
    <citation type="journal article" date="1996" name="J. Mol. Biol.">
        <title>Isolation, characterization and evolution of nine pufferfish (Fugu rubripes) actin genes.</title>
        <authorList>
            <person name="Venkatesh B."/>
            <person name="Tay B.H."/>
            <person name="Elgar G."/>
            <person name="Brenner S."/>
        </authorList>
    </citation>
    <scope>NUCLEOTIDE SEQUENCE [GENOMIC DNA]</scope>
    <scope>TISSUE SPECIFICITY</scope>
</reference>
<keyword id="KW-0007">Acetylation</keyword>
<keyword id="KW-0067">ATP-binding</keyword>
<keyword id="KW-0963">Cytoplasm</keyword>
<keyword id="KW-0206">Cytoskeleton</keyword>
<keyword id="KW-0378">Hydrolase</keyword>
<keyword id="KW-0488">Methylation</keyword>
<keyword id="KW-0514">Muscle protein</keyword>
<keyword id="KW-0547">Nucleotide-binding</keyword>
<keyword id="KW-0558">Oxidation</keyword>
<keyword id="KW-1185">Reference proteome</keyword>
<proteinExistence type="evidence at transcript level"/>
<protein>
    <recommendedName>
        <fullName>Actin, alpha skeletal muscle B</fullName>
        <ecNumber evidence="5">3.6.4.-</ecNumber>
    </recommendedName>
    <alternativeName>
        <fullName>Alpha-actin-1 B</fullName>
    </alternativeName>
    <component>
        <recommendedName>
            <fullName>Actin, alpha skeletal muscle B, intermediate form</fullName>
        </recommendedName>
    </component>
</protein>
<evidence type="ECO:0000250" key="1">
    <source>
        <dbReference type="UniProtKB" id="P62737"/>
    </source>
</evidence>
<evidence type="ECO:0000250" key="2">
    <source>
        <dbReference type="UniProtKB" id="P68133"/>
    </source>
</evidence>
<evidence type="ECO:0000250" key="3">
    <source>
        <dbReference type="UniProtKB" id="P68134"/>
    </source>
</evidence>
<evidence type="ECO:0000250" key="4">
    <source>
        <dbReference type="UniProtKB" id="P68135"/>
    </source>
</evidence>
<evidence type="ECO:0000250" key="5">
    <source>
        <dbReference type="UniProtKB" id="P68137"/>
    </source>
</evidence>
<evidence type="ECO:0000269" key="6">
    <source>
    </source>
</evidence>
<evidence type="ECO:0000305" key="7"/>